<protein>
    <recommendedName>
        <fullName>Leptin receptor</fullName>
        <shortName>LEP-R</shortName>
    </recommendedName>
    <alternativeName>
        <fullName>OB receptor</fullName>
        <shortName>OB-R</shortName>
    </alternativeName>
    <cdAntigenName>CD295</cdAntigenName>
</protein>
<keyword id="KW-0025">Alternative splicing</keyword>
<keyword id="KW-1003">Cell membrane</keyword>
<keyword id="KW-0225">Disease variant</keyword>
<keyword id="KW-1015">Disulfide bond</keyword>
<keyword id="KW-0325">Glycoprotein</keyword>
<keyword id="KW-0472">Membrane</keyword>
<keyword id="KW-0550">Obesity</keyword>
<keyword id="KW-0597">Phosphoprotein</keyword>
<keyword id="KW-0675">Receptor</keyword>
<keyword id="KW-1185">Reference proteome</keyword>
<keyword id="KW-0677">Repeat</keyword>
<keyword id="KW-0964">Secreted</keyword>
<keyword id="KW-0732">Signal</keyword>
<keyword id="KW-0812">Transmembrane</keyword>
<keyword id="KW-1133">Transmembrane helix</keyword>
<reference key="1">
    <citation type="journal article" date="1996" name="Nat. Genet.">
        <title>Leptin receptor missense mutation in the fatty Zucker rat.</title>
        <authorList>
            <person name="Phillips M.S."/>
            <person name="Liu Q."/>
            <person name="Hammond H.A."/>
            <person name="Dugan V."/>
            <person name="Hey P.J."/>
            <person name="Caskey C.T."/>
            <person name="Hess J.F."/>
        </authorList>
    </citation>
    <scope>NUCLEOTIDE SEQUENCE [MRNA] (ISOFORM B)</scope>
    <scope>VARIANT FA PRO-269</scope>
    <source>
        <strain>Zucker</strain>
        <tissue>Hypothalamus</tissue>
    </source>
</reference>
<reference key="2">
    <citation type="journal article" date="1996" name="Biochem. Biophys. Res. Commun.">
        <title>Substitution at codon 269 (glutamine --&gt; proline) of the leptin receptor (OB-R) cDNA is the only mutation found in the Zucker fatty (fa/fa) rat.</title>
        <authorList>
            <person name="Iida M."/>
            <person name="Murakami T."/>
            <person name="Ishida K."/>
            <person name="Mizuno A."/>
            <person name="Kuwajima M."/>
            <person name="Shima K."/>
        </authorList>
    </citation>
    <scope>NUCLEOTIDE SEQUENCE [MRNA] (ISOFORM B)</scope>
    <scope>VARIANT FA PRO-269</scope>
    <source>
        <strain>Sprague-Dawley</strain>
        <strain>Zucker fatty</strain>
        <tissue>Brain</tissue>
    </source>
</reference>
<reference key="3">
    <citation type="journal article" date="1996" name="Biochem. Biophys. Res. Commun.">
        <title>Molecular cloning of rat leptin receptor isoform complementary DNAs -- identification of a missense mutation in Zucker fatty (fa/fa) rats.</title>
        <authorList>
            <person name="Takaya K."/>
            <person name="Ogawa Y."/>
            <person name="Isse N."/>
            <person name="Okazaki T."/>
            <person name="Satoh N."/>
            <person name="Masuzaki H."/>
            <person name="Mori K."/>
            <person name="Tamura N."/>
            <person name="Hosoda K."/>
            <person name="Nakao K."/>
        </authorList>
    </citation>
    <scope>NUCLEOTIDE SEQUENCE [MRNA] (ISOFORMS A; B AND E)</scope>
    <scope>VARIANT FA PRO-269</scope>
    <source>
        <strain>Sprague-Dawley</strain>
        <strain>Zucker fatty</strain>
    </source>
</reference>
<reference key="4">
    <citation type="submission" date="1996-06" db="EMBL/GenBank/DDBJ databases">
        <title>Cloning of the rat leptin receptor.</title>
        <authorList>
            <person name="Karlsson C."/>
            <person name="Lindell K."/>
            <person name="Robinson I.C.A.F."/>
            <person name="Carlsson L.M.S."/>
            <person name="Carlsson B."/>
        </authorList>
    </citation>
    <scope>NUCLEOTIDE SEQUENCE [MRNA] (ISOFORM B)</scope>
</reference>
<reference key="5">
    <citation type="journal article" date="1996" name="Biochem. Biophys. Res. Commun.">
        <title>Phenotype-linked amino acid alteration in leptin receptor cDNA from Zucker fatty (fa/fa) rat.</title>
        <authorList>
            <person name="Iida M."/>
            <person name="Murakami T."/>
            <person name="Ishida K."/>
            <person name="Mizuno A."/>
            <person name="Kuwajima M."/>
            <person name="Shima K."/>
        </authorList>
    </citation>
    <scope>NUCLEOTIDE SEQUENCE [MRNA] (ISOFORM A)</scope>
    <scope>VARIANT FA PRO-269</scope>
    <source>
        <strain>Sprague-Dawley</strain>
        <strain>Zucker fatty</strain>
    </source>
</reference>
<reference key="6">
    <citation type="submission" date="2000-07" db="EMBL/GenBank/DDBJ databases">
        <title>Molecular cloning, sequencing, and recombinant expression of the long form of the rat leptin receptor isolated from whole spleen RNA.</title>
        <authorList>
            <person name="Park J.H."/>
            <person name="Ju S.K."/>
            <person name="Na S.Y."/>
            <person name="You K.H."/>
            <person name="Kim K.L."/>
        </authorList>
    </citation>
    <scope>NUCLEOTIDE SEQUENCE [MRNA] (ISOFORM B)</scope>
    <source>
        <strain>Sprague-Dawley</strain>
        <tissue>Spleen</tissue>
    </source>
</reference>
<reference key="7">
    <citation type="journal article" date="1996" name="FEBS Lett.">
        <title>A novel leptin receptor isoform in rat.</title>
        <authorList>
            <person name="Wang M.-Y."/>
            <person name="Zhou Y.T."/>
            <person name="Newgard C.B."/>
            <person name="Unger R.H."/>
        </authorList>
    </citation>
    <scope>NUCLEOTIDE SEQUENCE [MRNA] (ISOFORM F)</scope>
    <scope>TISSUE SPECIFICITY</scope>
    <source>
        <strain>Sprague-Dawley</strain>
        <tissue>Brain</tissue>
    </source>
</reference>
<reference key="8">
    <citation type="submission" date="1998-02" db="EMBL/GenBank/DDBJ databases">
        <title>Analysis of rat leptin receptor gene.</title>
        <authorList>
            <person name="Morishita T."/>
            <person name="Hidaka T."/>
            <person name="Kuzuyama T."/>
            <person name="Noguchi T."/>
        </authorList>
    </citation>
    <scope>NUCLEOTIDE SEQUENCE [GENOMIC DNA] OF 1-123</scope>
</reference>
<reference key="9">
    <citation type="journal article" date="1997" name="Biochem. Biophys. Res. Commun.">
        <title>Increase in serum leptin and uterine leptin receptor messenger RNA levels during pregnancy in rats.</title>
        <authorList>
            <person name="Chien E.K."/>
            <person name="Hara M."/>
            <person name="Rouard M."/>
            <person name="Yano H."/>
            <person name="Phillippe M."/>
            <person name="Polonsky K.S."/>
            <person name="Bell G.I."/>
        </authorList>
    </citation>
    <scope>NUCLEOTIDE SEQUENCE [MRNA] OF 557-802 AND 843-892 (ISOFORMS C AND E)</scope>
    <source>
        <strain>Sprague-Dawley</strain>
    </source>
</reference>
<reference key="10">
    <citation type="submission" date="1996-08" db="EMBL/GenBank/DDBJ databases">
        <title>Identification of a leptin receptor in islet.</title>
        <authorList>
            <person name="Ma Z."/>
        </authorList>
    </citation>
    <scope>NUCLEOTIDE SEQUENCE [MRNA] OF 694-878</scope>
    <source>
        <strain>Sprague-Dawley</strain>
        <tissue>Pancreas</tissue>
    </source>
</reference>
<reference key="11">
    <citation type="submission" date="2000-09" db="EMBL/GenBank/DDBJ databases">
        <title>Leptin receptor gene expression in rat kidney.</title>
        <authorList>
            <person name="Totsune K."/>
            <person name="Takahashi K."/>
            <person name="Mackenzie H.S."/>
            <person name="Murakami O."/>
            <person name="Arihara Z."/>
            <person name="Sone M."/>
            <person name="Satoh F."/>
            <person name="Mouri T."/>
            <person name="Brenner B.M."/>
            <person name="Ito S."/>
        </authorList>
    </citation>
    <scope>NUCLEOTIDE SEQUENCE [MRNA] OF 821-894 (ISOFORM A)</scope>
    <source>
        <strain>Wistar Munich</strain>
        <tissue>Kidney</tissue>
    </source>
</reference>
<reference key="12">
    <citation type="journal article" date="1999" name="Peptides">
        <title>Decreased transport of leptin across the blood-brain barrier in rats lacking the short form of the leptin receptor.</title>
        <authorList>
            <person name="Kastin A.J."/>
            <person name="Pan W."/>
            <person name="Maness L.M."/>
            <person name="Koletsky R.J."/>
            <person name="Ernsberger P."/>
        </authorList>
    </citation>
    <scope>FUNCTION (ISOFORM A)</scope>
</reference>
<reference key="13">
    <citation type="journal article" date="2002" name="Endocrinology">
        <title>Characterization of short isoforms of the leptin receptor in rat cerebral microvessels and of brain uptake of leptin in mouse models of obesity.</title>
        <authorList>
            <person name="Hileman S.M."/>
            <person name="Pierroz D.D."/>
            <person name="Masuzaki H."/>
            <person name="Bjoerbaek C."/>
            <person name="El-Haschimi K."/>
            <person name="Banks W.A."/>
            <person name="Flier J.S."/>
        </authorList>
    </citation>
    <scope>TISSUE SPECIFICITY</scope>
</reference>
<reference key="14">
    <citation type="journal article" date="2014" name="J. Endocrinol.">
        <title>20 years of leptin: connecting leptin signaling to biological function.</title>
        <authorList>
            <person name="Allison M.B."/>
            <person name="Myers M.G. Jr."/>
        </authorList>
    </citation>
    <scope>REVIEW ON FUNCTION</scope>
    <scope>SUBUNIT</scope>
</reference>
<reference key="15">
    <citation type="journal article" date="1996" name="Diabetes">
        <title>Phenotype of fatty due to Gln269Pro mutation in the leptin receptor (Lepr).</title>
        <authorList>
            <person name="Chua S.C. Jr."/>
            <person name="White D.W."/>
            <person name="Wu-Peng X.S."/>
            <person name="Liu S.M."/>
            <person name="Okada N."/>
            <person name="Kershaw E.E."/>
            <person name="Chung W.K."/>
            <person name="Power-Kehoe L."/>
            <person name="Chua M."/>
            <person name="Tartaglia L.A."/>
            <person name="Leibel R.L."/>
        </authorList>
    </citation>
    <scope>VARIANT FA PRO-269</scope>
</reference>
<gene>
    <name type="primary">Lepr</name>
    <name type="synonym">Fa</name>
    <name type="synonym">Obr</name>
</gene>
<organism>
    <name type="scientific">Rattus norvegicus</name>
    <name type="common">Rat</name>
    <dbReference type="NCBI Taxonomy" id="10116"/>
    <lineage>
        <taxon>Eukaryota</taxon>
        <taxon>Metazoa</taxon>
        <taxon>Chordata</taxon>
        <taxon>Craniata</taxon>
        <taxon>Vertebrata</taxon>
        <taxon>Euteleostomi</taxon>
        <taxon>Mammalia</taxon>
        <taxon>Eutheria</taxon>
        <taxon>Euarchontoglires</taxon>
        <taxon>Glires</taxon>
        <taxon>Rodentia</taxon>
        <taxon>Myomorpha</taxon>
        <taxon>Muroidea</taxon>
        <taxon>Muridae</taxon>
        <taxon>Murinae</taxon>
        <taxon>Rattus</taxon>
    </lineage>
</organism>
<feature type="signal peptide" evidence="3">
    <location>
        <begin position="1"/>
        <end position="21"/>
    </location>
</feature>
<feature type="chain" id="PRO_0000010908" description="Leptin receptor">
    <location>
        <begin position="22"/>
        <end position="1162"/>
    </location>
</feature>
<feature type="topological domain" description="Extracellular" evidence="3">
    <location>
        <begin position="22"/>
        <end position="839"/>
    </location>
</feature>
<feature type="transmembrane region" description="Helical" evidence="3">
    <location>
        <begin position="840"/>
        <end position="860"/>
    </location>
</feature>
<feature type="topological domain" description="Cytoplasmic" evidence="3">
    <location>
        <begin position="861"/>
        <end position="1162"/>
    </location>
</feature>
<feature type="domain" description="Fibronectin type-III 1" evidence="4">
    <location>
        <begin position="238"/>
        <end position="331"/>
    </location>
</feature>
<feature type="domain" description="Fibronectin type-III 2" evidence="4">
    <location>
        <begin position="537"/>
        <end position="632"/>
    </location>
</feature>
<feature type="domain" description="Fibronectin type-III 3" evidence="4">
    <location>
        <begin position="637"/>
        <end position="729"/>
    </location>
</feature>
<feature type="domain" description="Fibronectin type-III 4" evidence="4">
    <location>
        <begin position="738"/>
        <end position="831"/>
    </location>
</feature>
<feature type="region of interest" description="Leptin-binding" evidence="2">
    <location>
        <begin position="465"/>
        <end position="482"/>
    </location>
</feature>
<feature type="region of interest" description="Required for JAK2 activation" evidence="1">
    <location>
        <begin position="891"/>
        <end position="896"/>
    </location>
</feature>
<feature type="region of interest" description="Required for STAT3 phosphorylation" evidence="1">
    <location>
        <begin position="896"/>
        <end position="904"/>
    </location>
</feature>
<feature type="short sequence motif" description="WSXWS motif">
    <location>
        <begin position="620"/>
        <end position="624"/>
    </location>
</feature>
<feature type="short sequence motif" description="Box 1 motif">
    <location>
        <begin position="869"/>
        <end position="877"/>
    </location>
</feature>
<feature type="modified residue" description="Phosphoserine" evidence="2">
    <location>
        <position position="880"/>
    </location>
</feature>
<feature type="modified residue" description="Phosphotyrosine; by JAK2" evidence="1">
    <location>
        <position position="985"/>
    </location>
</feature>
<feature type="modified residue" description="Phosphotyrosine" evidence="1">
    <location>
        <position position="1077"/>
    </location>
</feature>
<feature type="modified residue" description="Phosphotyrosine; by JAK2" evidence="1">
    <location>
        <position position="1138"/>
    </location>
</feature>
<feature type="glycosylation site" description="N-linked (GlcNAc...) asparagine" evidence="3">
    <location>
        <position position="55"/>
    </location>
</feature>
<feature type="glycosylation site" description="N-linked (GlcNAc...) asparagine" evidence="3">
    <location>
        <position position="56"/>
    </location>
</feature>
<feature type="glycosylation site" description="N-linked (GlcNAc...) asparagine" evidence="3">
    <location>
        <position position="73"/>
    </location>
</feature>
<feature type="glycosylation site" description="N-linked (GlcNAc...) asparagine" evidence="3">
    <location>
        <position position="98"/>
    </location>
</feature>
<feature type="glycosylation site" description="N-linked (GlcNAc...) asparagine" evidence="3">
    <location>
        <position position="187"/>
    </location>
</feature>
<feature type="glycosylation site" description="N-linked (GlcNAc...) asparagine" evidence="3">
    <location>
        <position position="275"/>
    </location>
</feature>
<feature type="glycosylation site" description="N-linked (GlcNAc...) asparagine" evidence="3">
    <location>
        <position position="345"/>
    </location>
</feature>
<feature type="glycosylation site" description="N-linked (GlcNAc...) asparagine" evidence="3">
    <location>
        <position position="356"/>
    </location>
</feature>
<feature type="glycosylation site" description="N-linked (GlcNAc...) asparagine" evidence="3">
    <location>
        <position position="431"/>
    </location>
</feature>
<feature type="glycosylation site" description="N-linked (GlcNAc...) asparagine" evidence="3">
    <location>
        <position position="514"/>
    </location>
</feature>
<feature type="glycosylation site" description="N-linked (GlcNAc...) asparagine" evidence="3">
    <location>
        <position position="622"/>
    </location>
</feature>
<feature type="glycosylation site" description="N-linked (GlcNAc...) asparagine" evidence="3">
    <location>
        <position position="657"/>
    </location>
</feature>
<feature type="glycosylation site" description="N-linked (GlcNAc...) asparagine" evidence="3">
    <location>
        <position position="668"/>
    </location>
</feature>
<feature type="glycosylation site" description="N-linked (GlcNAc...) asparagine" evidence="3">
    <location>
        <position position="686"/>
    </location>
</feature>
<feature type="glycosylation site" description="N-linked (GlcNAc...) asparagine" evidence="3">
    <location>
        <position position="695"/>
    </location>
</feature>
<feature type="glycosylation site" description="N-linked (GlcNAc...) asparagine" evidence="3">
    <location>
        <position position="698"/>
    </location>
</feature>
<feature type="glycosylation site" description="N-linked (GlcNAc...) asparagine" evidence="3">
    <location>
        <position position="726"/>
    </location>
</feature>
<feature type="disulfide bond" evidence="2">
    <location>
        <begin position="37"/>
        <end position="90"/>
    </location>
</feature>
<feature type="disulfide bond" evidence="2">
    <location>
        <begin position="89"/>
        <end position="99"/>
    </location>
</feature>
<feature type="disulfide bond" evidence="2">
    <location>
        <begin position="131"/>
        <end position="142"/>
    </location>
</feature>
<feature type="disulfide bond" evidence="2">
    <location>
        <begin position="186"/>
        <end position="195"/>
    </location>
</feature>
<feature type="disulfide bond" evidence="2">
    <location>
        <begin position="188"/>
        <end position="193"/>
    </location>
</feature>
<feature type="disulfide bond" evidence="2">
    <location>
        <begin position="350"/>
        <end position="410"/>
    </location>
</feature>
<feature type="disulfide bond" evidence="2">
    <location>
        <begin position="411"/>
        <end position="416"/>
    </location>
</feature>
<feature type="disulfide bond" evidence="2">
    <location>
        <begin position="434"/>
        <end position="445"/>
    </location>
</feature>
<feature type="disulfide bond" evidence="2">
    <location>
        <begin position="471"/>
        <end position="526"/>
    </location>
</feature>
<feature type="disulfide bond" evidence="2">
    <location>
        <begin position="486"/>
        <end position="496"/>
    </location>
</feature>
<feature type="splice variant" id="VSP_001709" description="In isoform E." evidence="14 16">
    <original>DNFIPIEKY</original>
    <variation>GMCTVLLLN</variation>
    <location>
        <begin position="797"/>
        <end position="805"/>
    </location>
</feature>
<feature type="splice variant" id="VSP_001710" description="In isoform E." evidence="14 16">
    <location>
        <begin position="806"/>
        <end position="1162"/>
    </location>
</feature>
<feature type="splice variant" id="VSP_001711" description="In isoform F." evidence="15">
    <original>PETFEH</original>
    <variation>IMPGRN</variation>
    <location>
        <begin position="890"/>
        <end position="895"/>
    </location>
</feature>
<feature type="splice variant" id="VSP_001705" description="In isoform A." evidence="13 14 17">
    <original>PETFE</original>
    <variation>RADTL</variation>
    <location>
        <begin position="890"/>
        <end position="894"/>
    </location>
</feature>
<feature type="splice variant" id="VSP_001707" description="In isoform C." evidence="16">
    <original>PET</original>
    <variation>VTV</variation>
    <location>
        <begin position="890"/>
        <end position="892"/>
    </location>
</feature>
<feature type="splice variant" id="VSP_001708" description="In isoform C." evidence="16">
    <location>
        <begin position="893"/>
        <end position="1162"/>
    </location>
</feature>
<feature type="splice variant" id="VSP_001706" description="In isoform A." evidence="13 14 17">
    <location>
        <begin position="895"/>
        <end position="1162"/>
    </location>
</feature>
<feature type="splice variant" id="VSP_001712" description="In isoform F." evidence="15">
    <location>
        <begin position="896"/>
        <end position="1162"/>
    </location>
</feature>
<feature type="sequence variant" description="In FA." evidence="7 8 9 10 11">
    <original>Q</original>
    <variation>P</variation>
    <location>
        <position position="269"/>
    </location>
</feature>
<feature type="sequence conflict" description="In Ref. 4; AAB06616." evidence="18" ref="4">
    <original>T</original>
    <variation>M</variation>
    <location>
        <position position="2"/>
    </location>
</feature>
<feature type="sequence conflict" description="In Ref. 8; BAA24899." evidence="18" ref="8">
    <original>H</original>
    <variation>P</variation>
    <location>
        <position position="12"/>
    </location>
</feature>
<feature type="sequence conflict" description="In Ref. 8; BAA24899." evidence="18" ref="8">
    <original>K</original>
    <variation>R</variation>
    <location>
        <position position="34"/>
    </location>
</feature>
<feature type="sequence conflict" description="In Ref. 7; AAB03088." evidence="18" ref="7">
    <original>ACH</original>
    <variation>QCQ</variation>
    <location>
        <begin position="415"/>
        <end position="417"/>
    </location>
</feature>
<feature type="sequence conflict" description="In Ref. 7; AAB03088." evidence="18" ref="7">
    <original>E</original>
    <variation>D</variation>
    <location>
        <position position="422"/>
    </location>
</feature>
<feature type="sequence conflict" description="In Ref. 7; AAB03088." evidence="18" ref="7">
    <original>F</original>
    <variation>L</variation>
    <location>
        <position position="493"/>
    </location>
</feature>
<feature type="sequence conflict" description="In Ref. 7; AAB03088." evidence="18" ref="7">
    <original>F</original>
    <variation>S</variation>
    <location>
        <position position="498"/>
    </location>
</feature>
<feature type="sequence conflict" description="In Ref. 7; AAB03088." evidence="18" ref="7">
    <original>R</original>
    <variation>Q</variation>
    <location>
        <position position="612"/>
    </location>
</feature>
<feature type="sequence conflict" description="In Ref. 7; AAB03088." evidence="18" ref="7">
    <original>S</original>
    <variation>T</variation>
    <location>
        <position position="690"/>
    </location>
</feature>
<feature type="sequence conflict" description="In Ref. 7; AAB03088." evidence="18" ref="7">
    <original>WA</original>
    <variation>SG</variation>
    <location>
        <begin position="703"/>
        <end position="704"/>
    </location>
</feature>
<feature type="sequence conflict" description="In Ref. 7; AAB03088." evidence="18" ref="7">
    <original>A</original>
    <variation>D</variation>
    <location>
        <position position="714"/>
    </location>
</feature>
<feature type="sequence conflict" description="In Ref. 7; AAB03088." evidence="18" ref="7">
    <original>AV</original>
    <variation>GW</variation>
    <location>
        <begin position="738"/>
        <end position="739"/>
    </location>
</feature>
<feature type="sequence conflict" description="In Ref. 10; AAB40654." evidence="18" ref="10">
    <original>CV</original>
    <variation>SL</variation>
    <location>
        <begin position="751"/>
        <end position="752"/>
    </location>
</feature>
<feature type="sequence conflict" description="In Ref. 9; AAB63202." evidence="18" ref="9">
    <original>L</original>
    <variation>S</variation>
    <location>
        <position position="766"/>
    </location>
</feature>
<feature type="sequence conflict" description="In Ref. 9; AAB63202." evidence="18" ref="9">
    <original>R</original>
    <variation>K</variation>
    <location>
        <position position="785"/>
    </location>
</feature>
<feature type="sequence conflict" description="In Ref. 9; AAB63202." evidence="18" ref="9">
    <original>Y</original>
    <variation>N</variation>
    <location>
        <position position="794"/>
    </location>
</feature>
<feature type="sequence conflict" description="In Ref. 9; AAB63201." evidence="18" ref="9">
    <original>I</original>
    <variation>V</variation>
    <location>
        <position position="846"/>
    </location>
</feature>
<evidence type="ECO:0000250" key="1">
    <source>
        <dbReference type="UniProtKB" id="P48356"/>
    </source>
</evidence>
<evidence type="ECO:0000250" key="2">
    <source>
        <dbReference type="UniProtKB" id="P48357"/>
    </source>
</evidence>
<evidence type="ECO:0000255" key="3"/>
<evidence type="ECO:0000255" key="4">
    <source>
        <dbReference type="PROSITE-ProRule" id="PRU00316"/>
    </source>
</evidence>
<evidence type="ECO:0000269" key="5">
    <source>
    </source>
</evidence>
<evidence type="ECO:0000269" key="6">
    <source>
    </source>
</evidence>
<evidence type="ECO:0000269" key="7">
    <source>
    </source>
</evidence>
<evidence type="ECO:0000269" key="8">
    <source>
    </source>
</evidence>
<evidence type="ECO:0000269" key="9">
    <source>
    </source>
</evidence>
<evidence type="ECO:0000269" key="10">
    <source>
    </source>
</evidence>
<evidence type="ECO:0000269" key="11">
    <source>
    </source>
</evidence>
<evidence type="ECO:0000269" key="12">
    <source>
    </source>
</evidence>
<evidence type="ECO:0000303" key="13">
    <source>
    </source>
</evidence>
<evidence type="ECO:0000303" key="14">
    <source>
    </source>
</evidence>
<evidence type="ECO:0000303" key="15">
    <source>
    </source>
</evidence>
<evidence type="ECO:0000303" key="16">
    <source>
    </source>
</evidence>
<evidence type="ECO:0000303" key="17">
    <source ref="11"/>
</evidence>
<evidence type="ECO:0000305" key="18"/>
<evidence type="ECO:0000305" key="19">
    <source>
    </source>
</evidence>
<accession>Q62959</accession>
<accession>O35772</accession>
<accession>O35773</accession>
<accession>O54805</accession>
<accession>P70493</accession>
<accession>P70494</accession>
<accession>P70495</accession>
<accession>P97589</accession>
<accession>Q62960</accession>
<accession>Q63007</accession>
<accession>Q63385</accession>
<accession>Q63386</accession>
<accession>Q9ERI4</accession>
<name>LEPR_RAT</name>
<proteinExistence type="evidence at protein level"/>
<sequence>MTCQKFYVVLLHWEFLYVITALNLAYPTSPWRFKLFCAPPSTTDDSFLSPAGVPNNTSSLKGASEALVEAKFNSTGIYVSELSKTIFHCCFGNEQGQNCSALTGNTEGKTLASVVKPLVFRQLGVNWDIECWMKGDLTLFICHMEPLLKNPFKNYDSKVHLLYDLPEVIDDLPLPPLKDSFQTVQCNCSVRECECHVPVPRAKVNYALLMYLEITSAGVSFQSPLMSLQPMLVVKPDPPLGLRMEVTDDGNLKISWDSQTKAPFPLQYQVKYLENSTIVREAAEIVSDTSLLVDSVLPGSSYEVQVRSKRLDGSGVWSDWSLPQLFTTQDVMYFPPKILTSVGSNASFCCIYKNENQTISSKQIVWWMNLAEKIPETQYNTVSDHISKVTFSNLKATRPRGKFTYDAVYCCNEQACHHRYAELYVIDVNINISCETDGYLTKMTCRWSPSTIQSLVGSTVQLRYHRRSLYCPDNPSIRPTSELKNCVLQTDGFYECVFQPIFLLSGYTMWIRINHSLGSLDSPPTCVLPDSVVKPLPPSNVKAEITINTGLLKVSWEKPVFPENNLQFQIRYGLNGKEIQWKTHEVFDAKSKSASLPVSDLCAVYVVQVRCRRLDGLGYWSNWSSPAYTLVMDVKVPMRGPEFWRIMDGDITKKERNVTLLWKPLMKNDSLCSVRRYVVKHRTAHNGTWSQDVGNQTNLTFLWAESAHTVTVLAINSIGASLVNFNLTFSWPMSKVNAVQSLSAYPLSSSCVILSWTLSPNDYSLLYLVIEWKNLNDDDGMKWLRIPSNVNKYYIHDNFIPIEKYQFSLYPVFMEGVGKPKIINGFTKDDIAKQQNDAGLYVIVPIIISSCVLLLGTLLISHQRMKKLFWDDVPNPKNCSWAQGLNFQKPETFEHLFTKHAESVIFGPLLLEPEPVSEEISVDTAWKNKDEMVPAAMVSLLLTTPDSTRGSICISDQCNSANFSGAQSTQGTCEDECQSQPSVKYATLVSNVKTVETDEEQGAIHSSVSQCIARKHSPLRQSFSSNSWEIEAQAFFLLSDHPPNVISPQLSFSGLDELLELEGNFPEENHGEKSVYYLGVSSGNKRENDMLLTDEAGVLCPFPAHCLFSDIRILQESCSHFVENNLNLGTSGKNFVPYMPQFQSCSTHSHKIIENKMCDLTV</sequence>
<comment type="function">
    <text evidence="1 2 9 19">Receptor for hormone LEP/leptin (Probable). On ligand binding, mediates LEP central and peripheral effects through the activation of different signaling pathways such as JAK2/STAT3 and MAPK cascade/FOS. In the hypothalamus, LEP acts as an appetite-regulating factor that induces a decrease in food intake and an increase in energy consumption by inducing anorexinogenic factors and suppressing orexigenic neuropeptides, also regulates bone mass and secretion of hypothalamo-pituitary-adrenal hormones (PubMed:8690163). In the periphery, increases basal metabolism, influences reproductive function, regulates pancreatic beta-cell function and insulin secretion, is pro-angiogenic and affects innate and adaptive immunity (By similarity). Control of energy homeostasis and melanocortin production (stimulation of POMC and full repression of AgRP transcription) is mediated by STAT3 signaling, whereas distinct signals regulate NPY and the control of fertility, growth and glucose homeostasis. Involved in the regulation of counter-regulatory response to hypoglycemia by inhibiting neurons of the parabrachial nucleus. Has a specific effect on T lymphocyte responses, differentially regulating the proliferation of naive and memory T-cells. Leptin increases Th1 and suppresses Th2 cytokine production (By similarity).</text>
</comment>
<comment type="function">
    <molecule>Isoform A</molecule>
    <text evidence="1 5">May transport LEP across the blood-brain barrier. Binds LEP and mediates LEP endocytosis (PubMed:10698121). Does not induce phosphorylation of and activate STAT3 (By similarity).</text>
</comment>
<comment type="function">
    <molecule>Isoform E</molecule>
    <text evidence="1">Antagonizes Isoform A and isoform B-mediated LEP binding and endocytosis.</text>
</comment>
<comment type="subunit">
    <text evidence="1 2 19">Present as a mixture of monomers and dimers (Probable). The phosphorylated receptor binds a number of SH2 domain-containing proteins such as JAK2, STAT3, PTPN11, and SOCS3 (By similarity). Interaction with SOCS3 inhibits JAK/STAT signaling and MAPK cascade (By similarity).</text>
</comment>
<comment type="subcellular location">
    <subcellularLocation>
        <location evidence="2">Cell membrane</location>
        <topology evidence="2">Single-pass type I membrane protein</topology>
    </subcellularLocation>
    <subcellularLocation>
        <location evidence="2">Basolateral cell membrane</location>
    </subcellularLocation>
</comment>
<comment type="subcellular location">
    <molecule>Isoform E</molecule>
    <subcellularLocation>
        <location evidence="18">Secreted</location>
    </subcellularLocation>
</comment>
<comment type="alternative products">
    <event type="alternative splicing"/>
    <isoform>
        <id>Q62959-1</id>
        <name>B</name>
        <sequence type="displayed"/>
    </isoform>
    <isoform>
        <id>Q62959-2</id>
        <name>A</name>
        <sequence type="described" ref="VSP_001705 VSP_001706"/>
    </isoform>
    <isoform>
        <id>Q62959-3</id>
        <name>C</name>
        <sequence type="described" ref="VSP_001707 VSP_001708"/>
    </isoform>
    <isoform>
        <id>Q62959-6</id>
        <name>D</name>
        <sequence type="not described"/>
    </isoform>
    <isoform>
        <id>Q62959-4</id>
        <name>E</name>
        <sequence type="described" ref="VSP_001709 VSP_001710"/>
    </isoform>
    <isoform>
        <id>Q62959-5</id>
        <name>F</name>
        <sequence type="described" ref="VSP_001711 VSP_001712"/>
    </isoform>
</comment>
<comment type="tissue specificity">
    <text evidence="6 12">Isoform B is expressed in kidney, liver, lung, ovary, spleen and uterus. Increased level in uterus during gestation (PubMed:8772180). Isoform A and isoform C are predominantly expressed in cerebral microvessels and choroid plexus, with lower levels in cortex, cerebellum and hypothalamus but also liver and lung (PubMed:11861497). Isoform F is expressed at high levels in brain, liver and spleen and less in stomach, kidney, thymus, heart, lung and hypothalamus (PubMed:11861497, PubMed:8772180).</text>
</comment>
<comment type="domain">
    <text>The WSXWS motif appears to be necessary for proper protein folding and thereby efficient intracellular transport and cell-surface receptor binding.</text>
</comment>
<comment type="domain">
    <text>The box 1 motif is required for JAK interaction and/or activation.</text>
</comment>
<comment type="PTM">
    <text evidence="1">On ligand binding, phosphorylated on two conserved C-terminal tyrosine residues (isoform B only) by JAK2. Tyr-985 is required for complete binding and activation of PTPN11, ERK/FOS activation,for interaction with SOCS3 and SOCS3 mediated inhibition of leptin signaling. Phosphorylation on Tyr-1138 is required for STAT3 binding/activation. Phosphorylation of Tyr-1077 has a more accessory role.</text>
</comment>
<comment type="disease">
    <text>The fatty (Fa) mutation produces profound obesity of early onset caused by hyperphagia, defective non-shivering thermogenesis, and preferential deposition of energy into adipose tissue.</text>
</comment>
<comment type="similarity">
    <text evidence="18">Belongs to the type I cytokine receptor family. Type 2 subfamily.</text>
</comment>
<dbReference type="EMBL" id="U52966">
    <property type="protein sequence ID" value="AAC52587.1"/>
    <property type="molecule type" value="mRNA"/>
</dbReference>
<dbReference type="EMBL" id="D84550">
    <property type="protein sequence ID" value="BAA12697.1"/>
    <property type="molecule type" value="mRNA"/>
</dbReference>
<dbReference type="EMBL" id="D84551">
    <property type="protein sequence ID" value="BAA12698.1"/>
    <property type="molecule type" value="mRNA"/>
</dbReference>
<dbReference type="EMBL" id="D85557">
    <property type="protein sequence ID" value="BAA12830.1"/>
    <property type="molecule type" value="mRNA"/>
</dbReference>
<dbReference type="EMBL" id="D85558">
    <property type="protein sequence ID" value="BAA12831.1"/>
    <property type="molecule type" value="mRNA"/>
</dbReference>
<dbReference type="EMBL" id="D85559">
    <property type="protein sequence ID" value="BAA12832.1"/>
    <property type="molecule type" value="mRNA"/>
</dbReference>
<dbReference type="EMBL" id="U60151">
    <property type="protein sequence ID" value="AAB06616.1"/>
    <property type="molecule type" value="mRNA"/>
</dbReference>
<dbReference type="EMBL" id="D84125">
    <property type="protein sequence ID" value="BAA12230.1"/>
    <property type="molecule type" value="mRNA"/>
</dbReference>
<dbReference type="EMBL" id="D84126">
    <property type="protein sequence ID" value="BAA12231.1"/>
    <property type="molecule type" value="mRNA"/>
</dbReference>
<dbReference type="EMBL" id="AF287268">
    <property type="protein sequence ID" value="AAF89300.1"/>
    <property type="molecule type" value="mRNA"/>
</dbReference>
<dbReference type="EMBL" id="U53144">
    <property type="protein sequence ID" value="AAB03088.1"/>
    <property type="molecule type" value="mRNA"/>
</dbReference>
<dbReference type="EMBL" id="AB011006">
    <property type="protein sequence ID" value="BAA24899.1"/>
    <property type="molecule type" value="Genomic_DNA"/>
</dbReference>
<dbReference type="EMBL" id="AF007818">
    <property type="protein sequence ID" value="AAB63201.1"/>
    <property type="molecule type" value="mRNA"/>
</dbReference>
<dbReference type="EMBL" id="AF007819">
    <property type="protein sequence ID" value="AAB63202.1"/>
    <property type="molecule type" value="mRNA"/>
</dbReference>
<dbReference type="EMBL" id="U67207">
    <property type="protein sequence ID" value="AAB40654.1"/>
    <property type="molecule type" value="mRNA"/>
</dbReference>
<dbReference type="EMBL" id="AF304191">
    <property type="protein sequence ID" value="AAG22823.1"/>
    <property type="molecule type" value="mRNA"/>
</dbReference>
<dbReference type="PIR" id="JC4895">
    <property type="entry name" value="PC4184"/>
</dbReference>
<dbReference type="PIR" id="S74225">
    <property type="entry name" value="S74225"/>
</dbReference>
<dbReference type="RefSeq" id="NP_036728.1">
    <property type="nucleotide sequence ID" value="NM_012596.1"/>
</dbReference>
<dbReference type="SMR" id="Q62959"/>
<dbReference type="BioGRID" id="246689">
    <property type="interactions" value="1"/>
</dbReference>
<dbReference type="FunCoup" id="Q62959">
    <property type="interactions" value="339"/>
</dbReference>
<dbReference type="STRING" id="10116.ENSRNOP00000045398"/>
<dbReference type="GlyCosmos" id="Q62959">
    <property type="glycosylation" value="17 sites, No reported glycans"/>
</dbReference>
<dbReference type="GlyGen" id="Q62959">
    <property type="glycosylation" value="17 sites"/>
</dbReference>
<dbReference type="iPTMnet" id="Q62959"/>
<dbReference type="PhosphoSitePlus" id="Q62959"/>
<dbReference type="PaxDb" id="10116-ENSRNOP00000046647"/>
<dbReference type="GeneID" id="24536"/>
<dbReference type="KEGG" id="rno:24536"/>
<dbReference type="AGR" id="RGD:3001"/>
<dbReference type="CTD" id="3953"/>
<dbReference type="RGD" id="3001">
    <property type="gene designation" value="Lepr"/>
</dbReference>
<dbReference type="eggNOG" id="ENOG502RK5B">
    <property type="taxonomic scope" value="Eukaryota"/>
</dbReference>
<dbReference type="InParanoid" id="Q62959"/>
<dbReference type="PhylomeDB" id="Q62959"/>
<dbReference type="PRO" id="PR:Q62959"/>
<dbReference type="Proteomes" id="UP000002494">
    <property type="component" value="Unplaced"/>
</dbReference>
<dbReference type="GO" id="GO:0016323">
    <property type="term" value="C:basolateral plasma membrane"/>
    <property type="evidence" value="ECO:0007669"/>
    <property type="project" value="UniProtKB-SubCell"/>
</dbReference>
<dbReference type="GO" id="GO:0009897">
    <property type="term" value="C:external side of plasma membrane"/>
    <property type="evidence" value="ECO:0000318"/>
    <property type="project" value="GO_Central"/>
</dbReference>
<dbReference type="GO" id="GO:0005615">
    <property type="term" value="C:extracellular space"/>
    <property type="evidence" value="ECO:0000314"/>
    <property type="project" value="RGD"/>
</dbReference>
<dbReference type="GO" id="GO:0043235">
    <property type="term" value="C:receptor complex"/>
    <property type="evidence" value="ECO:0000266"/>
    <property type="project" value="RGD"/>
</dbReference>
<dbReference type="GO" id="GO:0019955">
    <property type="term" value="F:cytokine binding"/>
    <property type="evidence" value="ECO:0000318"/>
    <property type="project" value="GO_Central"/>
</dbReference>
<dbReference type="GO" id="GO:0004896">
    <property type="term" value="F:cytokine receptor activity"/>
    <property type="evidence" value="ECO:0000318"/>
    <property type="project" value="GO_Central"/>
</dbReference>
<dbReference type="GO" id="GO:0038021">
    <property type="term" value="F:leptin receptor activity"/>
    <property type="evidence" value="ECO:0000250"/>
    <property type="project" value="UniProtKB"/>
</dbReference>
<dbReference type="GO" id="GO:0017046">
    <property type="term" value="F:peptide hormone binding"/>
    <property type="evidence" value="ECO:0000314"/>
    <property type="project" value="RGD"/>
</dbReference>
<dbReference type="GO" id="GO:0016500">
    <property type="term" value="F:protein-hormone receptor activity"/>
    <property type="evidence" value="ECO:0000314"/>
    <property type="project" value="RGD"/>
</dbReference>
<dbReference type="GO" id="GO:0001525">
    <property type="term" value="P:angiogenesis"/>
    <property type="evidence" value="ECO:0000315"/>
    <property type="project" value="RGD"/>
</dbReference>
<dbReference type="GO" id="GO:0098868">
    <property type="term" value="P:bone growth"/>
    <property type="evidence" value="ECO:0000250"/>
    <property type="project" value="UniProtKB"/>
</dbReference>
<dbReference type="GO" id="GO:0097696">
    <property type="term" value="P:cell surface receptor signaling pathway via STAT"/>
    <property type="evidence" value="ECO:0000266"/>
    <property type="project" value="RGD"/>
</dbReference>
<dbReference type="GO" id="GO:0071311">
    <property type="term" value="P:cellular response to acetate"/>
    <property type="evidence" value="ECO:0000270"/>
    <property type="project" value="RGD"/>
</dbReference>
<dbReference type="GO" id="GO:1903545">
    <property type="term" value="P:cellular response to butyrate"/>
    <property type="evidence" value="ECO:0000270"/>
    <property type="project" value="RGD"/>
</dbReference>
<dbReference type="GO" id="GO:0008203">
    <property type="term" value="P:cholesterol metabolic process"/>
    <property type="evidence" value="ECO:0000266"/>
    <property type="project" value="RGD"/>
</dbReference>
<dbReference type="GO" id="GO:0019221">
    <property type="term" value="P:cytokine-mediated signaling pathway"/>
    <property type="evidence" value="ECO:0000318"/>
    <property type="project" value="GO_Central"/>
</dbReference>
<dbReference type="GO" id="GO:0042755">
    <property type="term" value="P:eating behavior"/>
    <property type="evidence" value="ECO:0000315"/>
    <property type="project" value="RGD"/>
</dbReference>
<dbReference type="GO" id="GO:0097009">
    <property type="term" value="P:energy homeostasis"/>
    <property type="evidence" value="ECO:0000250"/>
    <property type="project" value="UniProtKB"/>
</dbReference>
<dbReference type="GO" id="GO:0007565">
    <property type="term" value="P:female pregnancy"/>
    <property type="evidence" value="ECO:0000270"/>
    <property type="project" value="RGD"/>
</dbReference>
<dbReference type="GO" id="GO:0006091">
    <property type="term" value="P:generation of precursor metabolites and energy"/>
    <property type="evidence" value="ECO:0000303"/>
    <property type="project" value="RGD"/>
</dbReference>
<dbReference type="GO" id="GO:0014009">
    <property type="term" value="P:glial cell proliferation"/>
    <property type="evidence" value="ECO:0000266"/>
    <property type="project" value="RGD"/>
</dbReference>
<dbReference type="GO" id="GO:0006094">
    <property type="term" value="P:gluconeogenesis"/>
    <property type="evidence" value="ECO:0000266"/>
    <property type="project" value="RGD"/>
</dbReference>
<dbReference type="GO" id="GO:0042593">
    <property type="term" value="P:glucose homeostasis"/>
    <property type="evidence" value="ECO:0000250"/>
    <property type="project" value="UniProtKB"/>
</dbReference>
<dbReference type="GO" id="GO:0005977">
    <property type="term" value="P:glycogen metabolic process"/>
    <property type="evidence" value="ECO:0000266"/>
    <property type="project" value="RGD"/>
</dbReference>
<dbReference type="GO" id="GO:0033210">
    <property type="term" value="P:leptin-mediated signaling pathway"/>
    <property type="evidence" value="ECO:0000314"/>
    <property type="project" value="RGD"/>
</dbReference>
<dbReference type="GO" id="GO:0008584">
    <property type="term" value="P:male gonad development"/>
    <property type="evidence" value="ECO:0000270"/>
    <property type="project" value="RGD"/>
</dbReference>
<dbReference type="GO" id="GO:0010507">
    <property type="term" value="P:negative regulation of autophagy"/>
    <property type="evidence" value="ECO:0000250"/>
    <property type="project" value="UniProtKB"/>
</dbReference>
<dbReference type="GO" id="GO:1903999">
    <property type="term" value="P:negative regulation of eating behavior"/>
    <property type="evidence" value="ECO:0000315"/>
    <property type="project" value="RGD"/>
</dbReference>
<dbReference type="GO" id="GO:0045721">
    <property type="term" value="P:negative regulation of gluconeogenesis"/>
    <property type="evidence" value="ECO:0000266"/>
    <property type="project" value="RGD"/>
</dbReference>
<dbReference type="GO" id="GO:1904060">
    <property type="term" value="P:negative regulation of locomotor rhythm"/>
    <property type="evidence" value="ECO:0000315"/>
    <property type="project" value="RGD"/>
</dbReference>
<dbReference type="GO" id="GO:0001542">
    <property type="term" value="P:ovulation from ovarian follicle"/>
    <property type="evidence" value="ECO:0000270"/>
    <property type="project" value="RGD"/>
</dbReference>
<dbReference type="GO" id="GO:0006909">
    <property type="term" value="P:phagocytosis"/>
    <property type="evidence" value="ECO:0000250"/>
    <property type="project" value="UniProtKB"/>
</dbReference>
<dbReference type="GO" id="GO:0008284">
    <property type="term" value="P:positive regulation of cell population proliferation"/>
    <property type="evidence" value="ECO:0000318"/>
    <property type="project" value="GO_Central"/>
</dbReference>
<dbReference type="GO" id="GO:0120162">
    <property type="term" value="P:positive regulation of cold-induced thermogenesis"/>
    <property type="evidence" value="ECO:0000250"/>
    <property type="project" value="YuBioLab"/>
</dbReference>
<dbReference type="GO" id="GO:0035774">
    <property type="term" value="P:positive regulation of insulin secretion involved in cellular response to glucose stimulus"/>
    <property type="evidence" value="ECO:0000314"/>
    <property type="project" value="RGD"/>
</dbReference>
<dbReference type="GO" id="GO:0043410">
    <property type="term" value="P:positive regulation of MAPK cascade"/>
    <property type="evidence" value="ECO:0000314"/>
    <property type="project" value="RGD"/>
</dbReference>
<dbReference type="GO" id="GO:0046850">
    <property type="term" value="P:regulation of bone remodeling"/>
    <property type="evidence" value="ECO:0000250"/>
    <property type="project" value="UniProtKB"/>
</dbReference>
<dbReference type="GO" id="GO:0060259">
    <property type="term" value="P:regulation of feeding behavior"/>
    <property type="evidence" value="ECO:0000250"/>
    <property type="project" value="UniProtKB"/>
</dbReference>
<dbReference type="GO" id="GO:0051049">
    <property type="term" value="P:regulation of transport"/>
    <property type="evidence" value="ECO:0000266"/>
    <property type="project" value="RGD"/>
</dbReference>
<dbReference type="GO" id="GO:0071548">
    <property type="term" value="P:response to dexamethasone"/>
    <property type="evidence" value="ECO:0000270"/>
    <property type="project" value="RGD"/>
</dbReference>
<dbReference type="GO" id="GO:0043627">
    <property type="term" value="P:response to estrogen"/>
    <property type="evidence" value="ECO:0000270"/>
    <property type="project" value="RGD"/>
</dbReference>
<dbReference type="GO" id="GO:0001666">
    <property type="term" value="P:response to hypoxia"/>
    <property type="evidence" value="ECO:0000270"/>
    <property type="project" value="RGD"/>
</dbReference>
<dbReference type="GO" id="GO:0044321">
    <property type="term" value="P:response to leptin"/>
    <property type="evidence" value="ECO:0000270"/>
    <property type="project" value="RGD"/>
</dbReference>
<dbReference type="GO" id="GO:0033993">
    <property type="term" value="P:response to lipid"/>
    <property type="evidence" value="ECO:0000270"/>
    <property type="project" value="RGD"/>
</dbReference>
<dbReference type="GO" id="GO:0035094">
    <property type="term" value="P:response to nicotine"/>
    <property type="evidence" value="ECO:0000270"/>
    <property type="project" value="RGD"/>
</dbReference>
<dbReference type="GO" id="GO:0007584">
    <property type="term" value="P:response to nutrient"/>
    <property type="evidence" value="ECO:0000270"/>
    <property type="project" value="RGD"/>
</dbReference>
<dbReference type="GO" id="GO:0019953">
    <property type="term" value="P:sexual reproduction"/>
    <property type="evidence" value="ECO:0000250"/>
    <property type="project" value="UniProtKB"/>
</dbReference>
<dbReference type="GO" id="GO:0030217">
    <property type="term" value="P:T cell differentiation"/>
    <property type="evidence" value="ECO:0000250"/>
    <property type="project" value="UniProtKB"/>
</dbReference>
<dbReference type="CDD" id="cd00063">
    <property type="entry name" value="FN3"/>
    <property type="match status" value="4"/>
</dbReference>
<dbReference type="FunFam" id="2.60.40.10:FF:000494">
    <property type="entry name" value="Leptin receptor"/>
    <property type="match status" value="1"/>
</dbReference>
<dbReference type="FunFam" id="2.60.40.10:FF:000501">
    <property type="entry name" value="Leptin receptor"/>
    <property type="match status" value="1"/>
</dbReference>
<dbReference type="FunFam" id="2.60.40.10:FF:000515">
    <property type="entry name" value="Leptin receptor"/>
    <property type="match status" value="1"/>
</dbReference>
<dbReference type="FunFam" id="2.60.40.10:FF:000558">
    <property type="entry name" value="Leptin receptor"/>
    <property type="match status" value="1"/>
</dbReference>
<dbReference type="FunFam" id="2.60.40.10:FF:000568">
    <property type="entry name" value="Leptin receptor"/>
    <property type="match status" value="1"/>
</dbReference>
<dbReference type="FunFam" id="2.60.40.10:FF:000613">
    <property type="entry name" value="Leptin receptor"/>
    <property type="match status" value="1"/>
</dbReference>
<dbReference type="FunFam" id="2.60.40.10:FF:000688">
    <property type="entry name" value="Leptin receptor"/>
    <property type="match status" value="1"/>
</dbReference>
<dbReference type="Gene3D" id="2.60.40.10">
    <property type="entry name" value="Immunoglobulins"/>
    <property type="match status" value="7"/>
</dbReference>
<dbReference type="InterPro" id="IPR003961">
    <property type="entry name" value="FN3_dom"/>
</dbReference>
<dbReference type="InterPro" id="IPR036116">
    <property type="entry name" value="FN3_sf"/>
</dbReference>
<dbReference type="InterPro" id="IPR003529">
    <property type="entry name" value="Hematopoietin_rcpt_Gp130_CS"/>
</dbReference>
<dbReference type="InterPro" id="IPR003531">
    <property type="entry name" value="Hempt_rcpt_S_F1_CS"/>
</dbReference>
<dbReference type="InterPro" id="IPR013783">
    <property type="entry name" value="Ig-like_fold"/>
</dbReference>
<dbReference type="InterPro" id="IPR010457">
    <property type="entry name" value="IgC2-like_lig-bd"/>
</dbReference>
<dbReference type="InterPro" id="IPR041182">
    <property type="entry name" value="LEP-R_IGD"/>
</dbReference>
<dbReference type="PANTHER" id="PTHR23037">
    <property type="entry name" value="CYTOKINE RECEPTOR"/>
    <property type="match status" value="1"/>
</dbReference>
<dbReference type="PANTHER" id="PTHR23037:SF44">
    <property type="entry name" value="LEPTIN RECEPTOR"/>
    <property type="match status" value="1"/>
</dbReference>
<dbReference type="Pfam" id="PF00041">
    <property type="entry name" value="fn3"/>
    <property type="match status" value="1"/>
</dbReference>
<dbReference type="Pfam" id="PF06328">
    <property type="entry name" value="Lep_receptor_Ig"/>
    <property type="match status" value="1"/>
</dbReference>
<dbReference type="Pfam" id="PF18589">
    <property type="entry name" value="ObR_Ig"/>
    <property type="match status" value="2"/>
</dbReference>
<dbReference type="SMART" id="SM00060">
    <property type="entry name" value="FN3"/>
    <property type="match status" value="4"/>
</dbReference>
<dbReference type="SUPFAM" id="SSF49265">
    <property type="entry name" value="Fibronectin type III"/>
    <property type="match status" value="4"/>
</dbReference>
<dbReference type="PROSITE" id="PS50853">
    <property type="entry name" value="FN3"/>
    <property type="match status" value="3"/>
</dbReference>
<dbReference type="PROSITE" id="PS01353">
    <property type="entry name" value="HEMATOPO_REC_L_F2"/>
    <property type="match status" value="1"/>
</dbReference>